<organism>
    <name type="scientific">Arabidopsis thaliana</name>
    <name type="common">Mouse-ear cress</name>
    <dbReference type="NCBI Taxonomy" id="3702"/>
    <lineage>
        <taxon>Eukaryota</taxon>
        <taxon>Viridiplantae</taxon>
        <taxon>Streptophyta</taxon>
        <taxon>Embryophyta</taxon>
        <taxon>Tracheophyta</taxon>
        <taxon>Spermatophyta</taxon>
        <taxon>Magnoliopsida</taxon>
        <taxon>eudicotyledons</taxon>
        <taxon>Gunneridae</taxon>
        <taxon>Pentapetalae</taxon>
        <taxon>rosids</taxon>
        <taxon>malvids</taxon>
        <taxon>Brassicales</taxon>
        <taxon>Brassicaceae</taxon>
        <taxon>Camelineae</taxon>
        <taxon>Arabidopsis</taxon>
    </lineage>
</organism>
<gene>
    <name evidence="6" type="primary">BGLU2</name>
    <name evidence="8" type="ordered locus">At5g16580</name>
    <name evidence="9" type="ORF">MTG13.2</name>
</gene>
<proteinExistence type="uncertain"/>
<dbReference type="EC" id="3.2.1.21" evidence="1"/>
<dbReference type="EMBL" id="AB008270">
    <property type="protein sequence ID" value="BAB10185.1"/>
    <property type="status" value="ALT_SEQ"/>
    <property type="molecule type" value="Genomic_DNA"/>
</dbReference>
<dbReference type="EMBL" id="CP002688">
    <property type="protein sequence ID" value="AED92313.1"/>
    <property type="molecule type" value="Genomic_DNA"/>
</dbReference>
<dbReference type="RefSeq" id="NP_197161.2">
    <property type="nucleotide sequence ID" value="NM_121664.3"/>
</dbReference>
<dbReference type="SMR" id="Q9FMD8"/>
<dbReference type="FunCoup" id="Q9FMD8">
    <property type="interactions" value="193"/>
</dbReference>
<dbReference type="STRING" id="3702.Q9FMD8"/>
<dbReference type="CAZy" id="GH1">
    <property type="family name" value="Glycoside Hydrolase Family 1"/>
</dbReference>
<dbReference type="GlyCosmos" id="Q9FMD8">
    <property type="glycosylation" value="4 sites, No reported glycans"/>
</dbReference>
<dbReference type="GlyGen" id="Q9FMD8">
    <property type="glycosylation" value="4 sites"/>
</dbReference>
<dbReference type="PaxDb" id="3702-AT5G16580.1"/>
<dbReference type="EnsemblPlants" id="AT5G16580.1">
    <property type="protein sequence ID" value="AT5G16580.1"/>
    <property type="gene ID" value="AT5G16580"/>
</dbReference>
<dbReference type="GeneID" id="831520"/>
<dbReference type="Gramene" id="AT5G16580.1">
    <property type="protein sequence ID" value="AT5G16580.1"/>
    <property type="gene ID" value="AT5G16580"/>
</dbReference>
<dbReference type="KEGG" id="ath:AT5G16580"/>
<dbReference type="Araport" id="AT5G16580"/>
<dbReference type="TAIR" id="AT5G16580">
    <property type="gene designation" value="BGLU2"/>
</dbReference>
<dbReference type="eggNOG" id="KOG0626">
    <property type="taxonomic scope" value="Eukaryota"/>
</dbReference>
<dbReference type="HOGENOM" id="CLU_001859_4_0_1"/>
<dbReference type="InParanoid" id="Q9FMD8"/>
<dbReference type="OMA" id="FPWAMES"/>
<dbReference type="PhylomeDB" id="Q9FMD8"/>
<dbReference type="BioCyc" id="ARA:AT5G16580-MONOMER"/>
<dbReference type="Proteomes" id="UP000006548">
    <property type="component" value="Chromosome 5"/>
</dbReference>
<dbReference type="ExpressionAtlas" id="Q9FMD8">
    <property type="expression patterns" value="baseline and differential"/>
</dbReference>
<dbReference type="GO" id="GO:0008422">
    <property type="term" value="F:beta-glucosidase activity"/>
    <property type="evidence" value="ECO:0007669"/>
    <property type="project" value="UniProtKB-EC"/>
</dbReference>
<dbReference type="GO" id="GO:0005975">
    <property type="term" value="P:carbohydrate metabolic process"/>
    <property type="evidence" value="ECO:0007669"/>
    <property type="project" value="InterPro"/>
</dbReference>
<dbReference type="Gene3D" id="3.20.20.80">
    <property type="entry name" value="Glycosidases"/>
    <property type="match status" value="1"/>
</dbReference>
<dbReference type="InterPro" id="IPR001360">
    <property type="entry name" value="Glyco_hydro_1"/>
</dbReference>
<dbReference type="InterPro" id="IPR017853">
    <property type="entry name" value="Glycoside_hydrolase_SF"/>
</dbReference>
<dbReference type="PANTHER" id="PTHR10353:SF150">
    <property type="entry name" value="BETA-GLUCOSIDASE 1-RELATED"/>
    <property type="match status" value="1"/>
</dbReference>
<dbReference type="PANTHER" id="PTHR10353">
    <property type="entry name" value="GLYCOSYL HYDROLASE"/>
    <property type="match status" value="1"/>
</dbReference>
<dbReference type="Pfam" id="PF00232">
    <property type="entry name" value="Glyco_hydro_1"/>
    <property type="match status" value="1"/>
</dbReference>
<dbReference type="PRINTS" id="PR00131">
    <property type="entry name" value="GLHYDRLASE1"/>
</dbReference>
<dbReference type="SUPFAM" id="SSF51445">
    <property type="entry name" value="(Trans)glycosidases"/>
    <property type="match status" value="1"/>
</dbReference>
<keyword id="KW-1015">Disulfide bond</keyword>
<keyword id="KW-0325">Glycoprotein</keyword>
<keyword id="KW-0326">Glycosidase</keyword>
<keyword id="KW-0378">Hydrolase</keyword>
<keyword id="KW-1185">Reference proteome</keyword>
<keyword id="KW-0732">Signal</keyword>
<feature type="signal peptide" evidence="4">
    <location>
        <begin position="1"/>
        <end position="16"/>
    </location>
</feature>
<feature type="chain" id="PRO_0000389564" description="Putative beta-glucosidase 2">
    <location>
        <begin position="17"/>
        <end position="299"/>
    </location>
</feature>
<feature type="active site" description="Proton donor" evidence="2">
    <location>
        <position position="50"/>
    </location>
</feature>
<feature type="active site" description="Nucleophile" evidence="2">
    <location>
        <position position="255"/>
    </location>
</feature>
<feature type="binding site" evidence="2">
    <location>
        <begin position="49"/>
        <end position="50"/>
    </location>
    <ligand>
        <name>a beta-D-glucoside</name>
        <dbReference type="ChEBI" id="CHEBI:22798"/>
    </ligand>
</feature>
<feature type="binding site" evidence="2">
    <location>
        <position position="189"/>
    </location>
    <ligand>
        <name>a beta-D-glucoside</name>
        <dbReference type="ChEBI" id="CHEBI:22798"/>
    </ligand>
</feature>
<feature type="binding site" evidence="3">
    <location>
        <position position="255"/>
    </location>
    <ligand>
        <name>a beta-D-glucoside</name>
        <dbReference type="ChEBI" id="CHEBI:22798"/>
    </ligand>
</feature>
<feature type="glycosylation site" description="N-linked (GlcNAc...) asparagine" evidence="5">
    <location>
        <position position="71"/>
    </location>
</feature>
<feature type="glycosylation site" description="N-linked (GlcNAc...) asparagine" evidence="5">
    <location>
        <position position="76"/>
    </location>
</feature>
<feature type="glycosylation site" description="N-linked (GlcNAc...) asparagine" evidence="5">
    <location>
        <position position="222"/>
    </location>
</feature>
<feature type="glycosylation site" description="N-linked (GlcNAc...) asparagine" evidence="5">
    <location>
        <position position="290"/>
    </location>
</feature>
<feature type="disulfide bond" evidence="2">
    <location>
        <begin position="69"/>
        <end position="72"/>
    </location>
</feature>
<protein>
    <recommendedName>
        <fullName evidence="6">Putative beta-glucosidase 2</fullName>
        <shortName evidence="6">AtBGLU2</shortName>
        <ecNumber evidence="1">3.2.1.21</ecNumber>
    </recommendedName>
</protein>
<evidence type="ECO:0000250" key="1">
    <source>
        <dbReference type="UniProtKB" id="O64879"/>
    </source>
</evidence>
<evidence type="ECO:0000250" key="2">
    <source>
        <dbReference type="UniProtKB" id="Q7XSK0"/>
    </source>
</evidence>
<evidence type="ECO:0000250" key="3">
    <source>
        <dbReference type="UniProtKB" id="Q9SPP9"/>
    </source>
</evidence>
<evidence type="ECO:0000255" key="4"/>
<evidence type="ECO:0000255" key="5">
    <source>
        <dbReference type="PROSITE-ProRule" id="PRU00498"/>
    </source>
</evidence>
<evidence type="ECO:0000303" key="6">
    <source>
    </source>
</evidence>
<evidence type="ECO:0000305" key="7"/>
<evidence type="ECO:0000312" key="8">
    <source>
        <dbReference type="Araport" id="AT5G16580"/>
    </source>
</evidence>
<evidence type="ECO:0000312" key="9">
    <source>
        <dbReference type="EMBL" id="BAB10185.1"/>
    </source>
</evidence>
<name>BGL02_ARATH</name>
<comment type="catalytic activity">
    <reaction evidence="1">
        <text>Hydrolysis of terminal, non-reducing beta-D-glucosyl residues with release of beta-D-glucose.</text>
        <dbReference type="EC" id="3.2.1.21"/>
    </reaction>
</comment>
<comment type="similarity">
    <text evidence="7">Belongs to the glycosyl hydrolase 1 family.</text>
</comment>
<comment type="caution">
    <text evidence="7">Could be the product of a pseudogene.</text>
</comment>
<comment type="sequence caution" evidence="7">
    <conflict type="erroneous gene model prediction">
        <sequence resource="EMBL-CDS" id="BAB10185"/>
    </conflict>
</comment>
<sequence>MLHCITTIFLSISRMTMEDGPIAESYFTAYADVCFREFGNHVKFWTTINEANVFTIGGYNDGTSPPGRCSNCSSGNSSTETYIVGHNLLLAHASVSRLYQQKYKDKQGGSVGFSLYAFEFIPQTSSSKDDEIAIQRAKDFFYGWILGPLTFGDYPDEMKRAVGSRLPIFSKEESEQVKGSSDFIGIMHYFPALVENIKLKPSLSRNTDFYSDMGVSLTYLGNFSGFGYDVFPWAMESVLEYIKQTYGNPPVYILENGTPMKPDLELQQKDTRRIEYLQAYIGAVLKAVRNGSDTRGYFV</sequence>
<reference key="1">
    <citation type="journal article" date="1997" name="DNA Res.">
        <title>Structural analysis of Arabidopsis thaliana chromosome 5. III. Sequence features of the regions of 1,191,918 bp covered by seventeen physically assigned P1 clones.</title>
        <authorList>
            <person name="Nakamura Y."/>
            <person name="Sato S."/>
            <person name="Kaneko T."/>
            <person name="Kotani H."/>
            <person name="Asamizu E."/>
            <person name="Miyajima N."/>
            <person name="Tabata S."/>
        </authorList>
    </citation>
    <scope>NUCLEOTIDE SEQUENCE [LARGE SCALE GENOMIC DNA]</scope>
    <source>
        <strain>cv. Columbia</strain>
    </source>
</reference>
<reference key="2">
    <citation type="journal article" date="2017" name="Plant J.">
        <title>Araport11: a complete reannotation of the Arabidopsis thaliana reference genome.</title>
        <authorList>
            <person name="Cheng C.Y."/>
            <person name="Krishnakumar V."/>
            <person name="Chan A.P."/>
            <person name="Thibaud-Nissen F."/>
            <person name="Schobel S."/>
            <person name="Town C.D."/>
        </authorList>
    </citation>
    <scope>GENOME REANNOTATION</scope>
    <source>
        <strain>cv. Columbia</strain>
    </source>
</reference>
<reference key="3">
    <citation type="journal article" date="2004" name="Plant Mol. Biol.">
        <title>Functional genomic analysis of Arabidopsis thaliana glycoside hydrolase family 1.</title>
        <authorList>
            <person name="Xu Z."/>
            <person name="Escamilla-Trevino L.L."/>
            <person name="Zeng L."/>
            <person name="Lalgondar M."/>
            <person name="Bevan D.R."/>
            <person name="Winkel B.S.J."/>
            <person name="Mohamed A."/>
            <person name="Cheng C.-L."/>
            <person name="Shih M.-C."/>
            <person name="Poulton J.E."/>
            <person name="Esen A."/>
        </authorList>
    </citation>
    <scope>GENE FAMILY</scope>
    <scope>NOMENCLATURE</scope>
</reference>
<accession>Q9FMD8</accession>